<accession>Q5HGY7</accession>
<organism>
    <name type="scientific">Staphylococcus aureus (strain COL)</name>
    <dbReference type="NCBI Taxonomy" id="93062"/>
    <lineage>
        <taxon>Bacteria</taxon>
        <taxon>Bacillati</taxon>
        <taxon>Bacillota</taxon>
        <taxon>Bacilli</taxon>
        <taxon>Bacillales</taxon>
        <taxon>Staphylococcaceae</taxon>
        <taxon>Staphylococcus</taxon>
    </lineage>
</organism>
<evidence type="ECO:0000255" key="1">
    <source>
        <dbReference type="HAMAP-Rule" id="MF_01041"/>
    </source>
</evidence>
<dbReference type="EMBL" id="CP000046">
    <property type="protein sequence ID" value="AAW37986.1"/>
    <property type="molecule type" value="Genomic_DNA"/>
</dbReference>
<dbReference type="RefSeq" id="WP_000455597.1">
    <property type="nucleotide sequence ID" value="NZ_JBGOFO010000002.1"/>
</dbReference>
<dbReference type="SMR" id="Q5HGY7"/>
<dbReference type="KEGG" id="sac:SACOL1106"/>
<dbReference type="HOGENOM" id="CLU_166693_0_0_9"/>
<dbReference type="Proteomes" id="UP000000530">
    <property type="component" value="Chromosome"/>
</dbReference>
<dbReference type="Gene3D" id="1.10.220.80">
    <property type="entry name" value="BH2638-like"/>
    <property type="match status" value="1"/>
</dbReference>
<dbReference type="HAMAP" id="MF_01041">
    <property type="entry name" value="UPF0223"/>
    <property type="match status" value="1"/>
</dbReference>
<dbReference type="InterPro" id="IPR023324">
    <property type="entry name" value="BH2638-like_sf"/>
</dbReference>
<dbReference type="InterPro" id="IPR007920">
    <property type="entry name" value="UPF0223"/>
</dbReference>
<dbReference type="NCBIfam" id="NF003353">
    <property type="entry name" value="PRK04387.1"/>
    <property type="match status" value="1"/>
</dbReference>
<dbReference type="Pfam" id="PF05256">
    <property type="entry name" value="UPF0223"/>
    <property type="match status" value="1"/>
</dbReference>
<dbReference type="PIRSF" id="PIRSF037260">
    <property type="entry name" value="UPF0223"/>
    <property type="match status" value="1"/>
</dbReference>
<dbReference type="SUPFAM" id="SSF158504">
    <property type="entry name" value="BH2638-like"/>
    <property type="match status" value="1"/>
</dbReference>
<reference key="1">
    <citation type="journal article" date="2005" name="J. Bacteriol.">
        <title>Insights on evolution of virulence and resistance from the complete genome analysis of an early methicillin-resistant Staphylococcus aureus strain and a biofilm-producing methicillin-resistant Staphylococcus epidermidis strain.</title>
        <authorList>
            <person name="Gill S.R."/>
            <person name="Fouts D.E."/>
            <person name="Archer G.L."/>
            <person name="Mongodin E.F."/>
            <person name="DeBoy R.T."/>
            <person name="Ravel J."/>
            <person name="Paulsen I.T."/>
            <person name="Kolonay J.F."/>
            <person name="Brinkac L.M."/>
            <person name="Beanan M.J."/>
            <person name="Dodson R.J."/>
            <person name="Daugherty S.C."/>
            <person name="Madupu R."/>
            <person name="Angiuoli S.V."/>
            <person name="Durkin A.S."/>
            <person name="Haft D.H."/>
            <person name="Vamathevan J.J."/>
            <person name="Khouri H."/>
            <person name="Utterback T.R."/>
            <person name="Lee C."/>
            <person name="Dimitrov G."/>
            <person name="Jiang L."/>
            <person name="Qin H."/>
            <person name="Weidman J."/>
            <person name="Tran K."/>
            <person name="Kang K.H."/>
            <person name="Hance I.R."/>
            <person name="Nelson K.E."/>
            <person name="Fraser C.M."/>
        </authorList>
    </citation>
    <scope>NUCLEOTIDE SEQUENCE [LARGE SCALE GENOMIC DNA]</scope>
    <source>
        <strain>COL</strain>
    </source>
</reference>
<comment type="similarity">
    <text evidence="1">Belongs to the UPF0223 family.</text>
</comment>
<feature type="chain" id="PRO_0000216683" description="UPF0223 protein SACOL1106">
    <location>
        <begin position="1"/>
        <end position="91"/>
    </location>
</feature>
<name>Y1106_STAAC</name>
<sequence length="91" mass="10692">MEYEYPIDLDWSNEEMISVINFFNHVEKYYESGVTAGDFMGAYKRFKEIVPAKAEEKQIFNTFEKSSGYNSYKAVQDVKTHSEEQRVTAKK</sequence>
<gene>
    <name type="ordered locus">SACOL1106</name>
</gene>
<protein>
    <recommendedName>
        <fullName evidence="1">UPF0223 protein SACOL1106</fullName>
    </recommendedName>
</protein>
<proteinExistence type="inferred from homology"/>